<protein>
    <recommendedName>
        <fullName evidence="1">FMN-dependent NADH:quinone oxidoreductase</fullName>
        <ecNumber evidence="1">1.6.5.-</ecNumber>
    </recommendedName>
    <alternativeName>
        <fullName evidence="1">Azo-dye reductase</fullName>
    </alternativeName>
    <alternativeName>
        <fullName evidence="1">FMN-dependent NADH-azo compound oxidoreductase</fullName>
    </alternativeName>
    <alternativeName>
        <fullName evidence="1">FMN-dependent NADH-azoreductase</fullName>
        <ecNumber evidence="1">1.7.1.17</ecNumber>
    </alternativeName>
</protein>
<name>AZOR_MESHJ</name>
<feature type="chain" id="PRO_0000245935" description="FMN-dependent NADH:quinone oxidoreductase">
    <location>
        <begin position="1"/>
        <end position="201"/>
    </location>
</feature>
<feature type="binding site" evidence="1">
    <location>
        <position position="9"/>
    </location>
    <ligand>
        <name>FMN</name>
        <dbReference type="ChEBI" id="CHEBI:58210"/>
    </ligand>
</feature>
<feature type="binding site" evidence="1">
    <location>
        <begin position="16"/>
        <end position="18"/>
    </location>
    <ligand>
        <name>FMN</name>
        <dbReference type="ChEBI" id="CHEBI:58210"/>
    </ligand>
</feature>
<reference key="1">
    <citation type="journal article" date="2005" name="J. Bacteriol.">
        <title>Swine and poultry pathogens: the complete genome sequences of two strains of Mycoplasma hyopneumoniae and a strain of Mycoplasma synoviae.</title>
        <authorList>
            <person name="Vasconcelos A.T.R."/>
            <person name="Ferreira H.B."/>
            <person name="Bizarro C.V."/>
            <person name="Bonatto S.L."/>
            <person name="Carvalho M.O."/>
            <person name="Pinto P.M."/>
            <person name="Almeida D.F."/>
            <person name="Almeida L.G.P."/>
            <person name="Almeida R."/>
            <person name="Alves-Junior L."/>
            <person name="Assuncao E.N."/>
            <person name="Azevedo V.A.C."/>
            <person name="Bogo M.R."/>
            <person name="Brigido M.M."/>
            <person name="Brocchi M."/>
            <person name="Burity H.A."/>
            <person name="Camargo A.A."/>
            <person name="Camargo S.S."/>
            <person name="Carepo M.S."/>
            <person name="Carraro D.M."/>
            <person name="de Mattos Cascardo J.C."/>
            <person name="Castro L.A."/>
            <person name="Cavalcanti G."/>
            <person name="Chemale G."/>
            <person name="Collevatti R.G."/>
            <person name="Cunha C.W."/>
            <person name="Dallagiovanna B."/>
            <person name="Dambros B.P."/>
            <person name="Dellagostin O.A."/>
            <person name="Falcao C."/>
            <person name="Fantinatti-Garboggini F."/>
            <person name="Felipe M.S.S."/>
            <person name="Fiorentin L."/>
            <person name="Franco G.R."/>
            <person name="Freitas N.S.A."/>
            <person name="Frias D."/>
            <person name="Grangeiro T.B."/>
            <person name="Grisard E.C."/>
            <person name="Guimaraes C.T."/>
            <person name="Hungria M."/>
            <person name="Jardim S.N."/>
            <person name="Krieger M.A."/>
            <person name="Laurino J.P."/>
            <person name="Lima L.F.A."/>
            <person name="Lopes M.I."/>
            <person name="Loreto E.L.S."/>
            <person name="Madeira H.M.F."/>
            <person name="Manfio G.P."/>
            <person name="Maranhao A.Q."/>
            <person name="Martinkovics C.T."/>
            <person name="Medeiros S.R.B."/>
            <person name="Moreira M.A.M."/>
            <person name="Neiva M."/>
            <person name="Ramalho-Neto C.E."/>
            <person name="Nicolas M.F."/>
            <person name="Oliveira S.C."/>
            <person name="Paixao R.F.C."/>
            <person name="Pedrosa F.O."/>
            <person name="Pena S.D.J."/>
            <person name="Pereira M."/>
            <person name="Pereira-Ferrari L."/>
            <person name="Piffer I."/>
            <person name="Pinto L.S."/>
            <person name="Potrich D.P."/>
            <person name="Salim A.C.M."/>
            <person name="Santos F.R."/>
            <person name="Schmitt R."/>
            <person name="Schneider M.P.C."/>
            <person name="Schrank A."/>
            <person name="Schrank I.S."/>
            <person name="Schuck A.F."/>
            <person name="Seuanez H.N."/>
            <person name="Silva D.W."/>
            <person name="Silva R."/>
            <person name="Silva S.C."/>
            <person name="Soares C.M.A."/>
            <person name="Souza K.R.L."/>
            <person name="Souza R.C."/>
            <person name="Staats C.C."/>
            <person name="Steffens M.B.R."/>
            <person name="Teixeira S.M.R."/>
            <person name="Urmenyi T.P."/>
            <person name="Vainstein M.H."/>
            <person name="Zuccherato L.W."/>
            <person name="Simpson A.J.G."/>
            <person name="Zaha A."/>
        </authorList>
    </citation>
    <scope>NUCLEOTIDE SEQUENCE [LARGE SCALE GENOMIC DNA]</scope>
    <source>
        <strain>J / ATCC 25934 / NCTC 10110</strain>
    </source>
</reference>
<evidence type="ECO:0000255" key="1">
    <source>
        <dbReference type="HAMAP-Rule" id="MF_01216"/>
    </source>
</evidence>
<proteinExistence type="inferred from homology"/>
<dbReference type="EC" id="1.6.5.-" evidence="1"/>
<dbReference type="EC" id="1.7.1.17" evidence="1"/>
<dbReference type="EMBL" id="AE017243">
    <property type="protein sequence ID" value="AAZ44538.1"/>
    <property type="molecule type" value="Genomic_DNA"/>
</dbReference>
<dbReference type="RefSeq" id="WP_011284209.1">
    <property type="nucleotide sequence ID" value="NC_007295.1"/>
</dbReference>
<dbReference type="SMR" id="Q4A9N3"/>
<dbReference type="GeneID" id="41334751"/>
<dbReference type="KEGG" id="mhj:MHJ_0452"/>
<dbReference type="eggNOG" id="COG1182">
    <property type="taxonomic scope" value="Bacteria"/>
</dbReference>
<dbReference type="HOGENOM" id="CLU_088964_2_0_14"/>
<dbReference type="Proteomes" id="UP000000548">
    <property type="component" value="Chromosome"/>
</dbReference>
<dbReference type="GO" id="GO:0009055">
    <property type="term" value="F:electron transfer activity"/>
    <property type="evidence" value="ECO:0007669"/>
    <property type="project" value="UniProtKB-UniRule"/>
</dbReference>
<dbReference type="GO" id="GO:0010181">
    <property type="term" value="F:FMN binding"/>
    <property type="evidence" value="ECO:0007669"/>
    <property type="project" value="UniProtKB-UniRule"/>
</dbReference>
<dbReference type="GO" id="GO:0016652">
    <property type="term" value="F:oxidoreductase activity, acting on NAD(P)H as acceptor"/>
    <property type="evidence" value="ECO:0007669"/>
    <property type="project" value="UniProtKB-UniRule"/>
</dbReference>
<dbReference type="GO" id="GO:0016655">
    <property type="term" value="F:oxidoreductase activity, acting on NAD(P)H, quinone or similar compound as acceptor"/>
    <property type="evidence" value="ECO:0007669"/>
    <property type="project" value="InterPro"/>
</dbReference>
<dbReference type="Gene3D" id="3.40.50.360">
    <property type="match status" value="1"/>
</dbReference>
<dbReference type="HAMAP" id="MF_01216">
    <property type="entry name" value="Azoreductase_type1"/>
    <property type="match status" value="1"/>
</dbReference>
<dbReference type="InterPro" id="IPR003680">
    <property type="entry name" value="Flavodoxin_fold"/>
</dbReference>
<dbReference type="InterPro" id="IPR029039">
    <property type="entry name" value="Flavoprotein-like_sf"/>
</dbReference>
<dbReference type="InterPro" id="IPR050104">
    <property type="entry name" value="FMN-dep_NADH:Q_OxRdtase_AzoR1"/>
</dbReference>
<dbReference type="InterPro" id="IPR023048">
    <property type="entry name" value="NADH:quinone_OxRdtase_FMN_depd"/>
</dbReference>
<dbReference type="NCBIfam" id="NF002370">
    <property type="entry name" value="PRK01355.1"/>
    <property type="match status" value="1"/>
</dbReference>
<dbReference type="PANTHER" id="PTHR43741">
    <property type="entry name" value="FMN-DEPENDENT NADH-AZOREDUCTASE 1"/>
    <property type="match status" value="1"/>
</dbReference>
<dbReference type="PANTHER" id="PTHR43741:SF4">
    <property type="entry name" value="FMN-DEPENDENT NADH:QUINONE OXIDOREDUCTASE"/>
    <property type="match status" value="1"/>
</dbReference>
<dbReference type="Pfam" id="PF02525">
    <property type="entry name" value="Flavodoxin_2"/>
    <property type="match status" value="1"/>
</dbReference>
<dbReference type="SUPFAM" id="SSF52218">
    <property type="entry name" value="Flavoproteins"/>
    <property type="match status" value="1"/>
</dbReference>
<organism>
    <name type="scientific">Mesomycoplasma hyopneumoniae (strain J / ATCC 25934 / NCTC 10110)</name>
    <name type="common">Mycoplasma hyopneumoniae</name>
    <dbReference type="NCBI Taxonomy" id="262719"/>
    <lineage>
        <taxon>Bacteria</taxon>
        <taxon>Bacillati</taxon>
        <taxon>Mycoplasmatota</taxon>
        <taxon>Mycoplasmoidales</taxon>
        <taxon>Metamycoplasmataceae</taxon>
        <taxon>Mesomycoplasma</taxon>
    </lineage>
</organism>
<sequence length="201" mass="22958">MNILVIKSSVNEKKGSYSSHLSDLFIKFYLEIHPDDQIEVYDLNQFGLANTNLTMKNFEDKTFYQKAESDFWINKLRNADKIVFSTSMTNFNYSATTKNFFDAITVPNKTFLLDKNTGKYTGLLKNIQNVQILTAQGAPLGWYPFGNHSALIKQIFEFLGANVRSDFFVLDGTKVAPNNQKPIADFVAQRQNQIKILAENF</sequence>
<keyword id="KW-0285">Flavoprotein</keyword>
<keyword id="KW-0288">FMN</keyword>
<keyword id="KW-0520">NAD</keyword>
<keyword id="KW-0560">Oxidoreductase</keyword>
<gene>
    <name evidence="1" type="primary">azoR</name>
    <name type="ordered locus">MHJ_0452</name>
</gene>
<comment type="function">
    <text evidence="1">Quinone reductase that provides resistance to thiol-specific stress caused by electrophilic quinones.</text>
</comment>
<comment type="function">
    <text evidence="1">Also exhibits azoreductase activity. Catalyzes the reductive cleavage of the azo bond in aromatic azo compounds to the corresponding amines.</text>
</comment>
<comment type="catalytic activity">
    <reaction evidence="1">
        <text>2 a quinone + NADH + H(+) = 2 a 1,4-benzosemiquinone + NAD(+)</text>
        <dbReference type="Rhea" id="RHEA:65952"/>
        <dbReference type="ChEBI" id="CHEBI:15378"/>
        <dbReference type="ChEBI" id="CHEBI:57540"/>
        <dbReference type="ChEBI" id="CHEBI:57945"/>
        <dbReference type="ChEBI" id="CHEBI:132124"/>
        <dbReference type="ChEBI" id="CHEBI:134225"/>
    </reaction>
</comment>
<comment type="catalytic activity">
    <reaction evidence="1">
        <text>N,N-dimethyl-1,4-phenylenediamine + anthranilate + 2 NAD(+) = 2-(4-dimethylaminophenyl)diazenylbenzoate + 2 NADH + 2 H(+)</text>
        <dbReference type="Rhea" id="RHEA:55872"/>
        <dbReference type="ChEBI" id="CHEBI:15378"/>
        <dbReference type="ChEBI" id="CHEBI:15783"/>
        <dbReference type="ChEBI" id="CHEBI:16567"/>
        <dbReference type="ChEBI" id="CHEBI:57540"/>
        <dbReference type="ChEBI" id="CHEBI:57945"/>
        <dbReference type="ChEBI" id="CHEBI:71579"/>
        <dbReference type="EC" id="1.7.1.17"/>
    </reaction>
</comment>
<comment type="cofactor">
    <cofactor evidence="1">
        <name>FMN</name>
        <dbReference type="ChEBI" id="CHEBI:58210"/>
    </cofactor>
    <text evidence="1">Binds 1 FMN per subunit.</text>
</comment>
<comment type="subunit">
    <text evidence="1">Homodimer.</text>
</comment>
<comment type="similarity">
    <text evidence="1">Belongs to the azoreductase type 1 family.</text>
</comment>
<accession>Q4A9N3</accession>